<accession>Q7W1P0</accession>
<dbReference type="EMBL" id="BX640423">
    <property type="protein sequence ID" value="CAE40052.1"/>
    <property type="molecule type" value="Genomic_DNA"/>
</dbReference>
<dbReference type="RefSeq" id="WP_003807462.1">
    <property type="nucleotide sequence ID" value="NC_002928.3"/>
</dbReference>
<dbReference type="SMR" id="Q7W1P0"/>
<dbReference type="GeneID" id="93206542"/>
<dbReference type="KEGG" id="bpa:BPP0311"/>
<dbReference type="HOGENOM" id="CLU_061463_3_2_4"/>
<dbReference type="Proteomes" id="UP000001421">
    <property type="component" value="Chromosome"/>
</dbReference>
<dbReference type="GO" id="GO:0005737">
    <property type="term" value="C:cytoplasm"/>
    <property type="evidence" value="ECO:0007669"/>
    <property type="project" value="UniProtKB-ARBA"/>
</dbReference>
<dbReference type="GO" id="GO:1990904">
    <property type="term" value="C:ribonucleoprotein complex"/>
    <property type="evidence" value="ECO:0007669"/>
    <property type="project" value="UniProtKB-KW"/>
</dbReference>
<dbReference type="GO" id="GO:0005840">
    <property type="term" value="C:ribosome"/>
    <property type="evidence" value="ECO:0007669"/>
    <property type="project" value="UniProtKB-KW"/>
</dbReference>
<dbReference type="GO" id="GO:0019843">
    <property type="term" value="F:rRNA binding"/>
    <property type="evidence" value="ECO:0007669"/>
    <property type="project" value="UniProtKB-UniRule"/>
</dbReference>
<dbReference type="GO" id="GO:0003735">
    <property type="term" value="F:structural constituent of ribosome"/>
    <property type="evidence" value="ECO:0007669"/>
    <property type="project" value="InterPro"/>
</dbReference>
<dbReference type="GO" id="GO:0006412">
    <property type="term" value="P:translation"/>
    <property type="evidence" value="ECO:0007669"/>
    <property type="project" value="UniProtKB-UniRule"/>
</dbReference>
<dbReference type="HAMAP" id="MF_01363">
    <property type="entry name" value="Ribosomal_bL21"/>
    <property type="match status" value="1"/>
</dbReference>
<dbReference type="InterPro" id="IPR028909">
    <property type="entry name" value="bL21-like"/>
</dbReference>
<dbReference type="InterPro" id="IPR036164">
    <property type="entry name" value="bL21-like_sf"/>
</dbReference>
<dbReference type="InterPro" id="IPR001787">
    <property type="entry name" value="Ribosomal_bL21"/>
</dbReference>
<dbReference type="InterPro" id="IPR018258">
    <property type="entry name" value="Ribosomal_bL21_CS"/>
</dbReference>
<dbReference type="NCBIfam" id="TIGR00061">
    <property type="entry name" value="L21"/>
    <property type="match status" value="1"/>
</dbReference>
<dbReference type="PANTHER" id="PTHR21349">
    <property type="entry name" value="50S RIBOSOMAL PROTEIN L21"/>
    <property type="match status" value="1"/>
</dbReference>
<dbReference type="PANTHER" id="PTHR21349:SF0">
    <property type="entry name" value="LARGE RIBOSOMAL SUBUNIT PROTEIN BL21M"/>
    <property type="match status" value="1"/>
</dbReference>
<dbReference type="Pfam" id="PF00829">
    <property type="entry name" value="Ribosomal_L21p"/>
    <property type="match status" value="1"/>
</dbReference>
<dbReference type="SUPFAM" id="SSF141091">
    <property type="entry name" value="L21p-like"/>
    <property type="match status" value="1"/>
</dbReference>
<dbReference type="PROSITE" id="PS01169">
    <property type="entry name" value="RIBOSOMAL_L21"/>
    <property type="match status" value="1"/>
</dbReference>
<protein>
    <recommendedName>
        <fullName evidence="1">Large ribosomal subunit protein bL21</fullName>
    </recommendedName>
    <alternativeName>
        <fullName evidence="2">50S ribosomal protein L21</fullName>
    </alternativeName>
</protein>
<sequence length="103" mass="11547">MYAVIKTGGKQYRVATGEKLKVEQIPADIGQEITLDQVLSVGEGDQLKVGTPLVSGAVVKATVLAHGRHDKIKIFKMRRRKHYQKHQGHRQNYTEIRIEAITA</sequence>
<reference key="1">
    <citation type="journal article" date="2003" name="Nat. Genet.">
        <title>Comparative analysis of the genome sequences of Bordetella pertussis, Bordetella parapertussis and Bordetella bronchiseptica.</title>
        <authorList>
            <person name="Parkhill J."/>
            <person name="Sebaihia M."/>
            <person name="Preston A."/>
            <person name="Murphy L.D."/>
            <person name="Thomson N.R."/>
            <person name="Harris D.E."/>
            <person name="Holden M.T.G."/>
            <person name="Churcher C.M."/>
            <person name="Bentley S.D."/>
            <person name="Mungall K.L."/>
            <person name="Cerdeno-Tarraga A.-M."/>
            <person name="Temple L."/>
            <person name="James K.D."/>
            <person name="Harris B."/>
            <person name="Quail M.A."/>
            <person name="Achtman M."/>
            <person name="Atkin R."/>
            <person name="Baker S."/>
            <person name="Basham D."/>
            <person name="Bason N."/>
            <person name="Cherevach I."/>
            <person name="Chillingworth T."/>
            <person name="Collins M."/>
            <person name="Cronin A."/>
            <person name="Davis P."/>
            <person name="Doggett J."/>
            <person name="Feltwell T."/>
            <person name="Goble A."/>
            <person name="Hamlin N."/>
            <person name="Hauser H."/>
            <person name="Holroyd S."/>
            <person name="Jagels K."/>
            <person name="Leather S."/>
            <person name="Moule S."/>
            <person name="Norberczak H."/>
            <person name="O'Neil S."/>
            <person name="Ormond D."/>
            <person name="Price C."/>
            <person name="Rabbinowitsch E."/>
            <person name="Rutter S."/>
            <person name="Sanders M."/>
            <person name="Saunders D."/>
            <person name="Seeger K."/>
            <person name="Sharp S."/>
            <person name="Simmonds M."/>
            <person name="Skelton J."/>
            <person name="Squares R."/>
            <person name="Squares S."/>
            <person name="Stevens K."/>
            <person name="Unwin L."/>
            <person name="Whitehead S."/>
            <person name="Barrell B.G."/>
            <person name="Maskell D.J."/>
        </authorList>
    </citation>
    <scope>NUCLEOTIDE SEQUENCE [LARGE SCALE GENOMIC DNA]</scope>
    <source>
        <strain>12822 / ATCC BAA-587 / NCTC 13253</strain>
    </source>
</reference>
<feature type="chain" id="PRO_0000269287" description="Large ribosomal subunit protein bL21">
    <location>
        <begin position="1"/>
        <end position="103"/>
    </location>
</feature>
<gene>
    <name evidence="1" type="primary">rplU</name>
    <name type="ordered locus">BPP0311</name>
</gene>
<proteinExistence type="inferred from homology"/>
<keyword id="KW-0687">Ribonucleoprotein</keyword>
<keyword id="KW-0689">Ribosomal protein</keyword>
<keyword id="KW-0694">RNA-binding</keyword>
<keyword id="KW-0699">rRNA-binding</keyword>
<evidence type="ECO:0000255" key="1">
    <source>
        <dbReference type="HAMAP-Rule" id="MF_01363"/>
    </source>
</evidence>
<evidence type="ECO:0000305" key="2"/>
<name>RL21_BORPA</name>
<organism>
    <name type="scientific">Bordetella parapertussis (strain 12822 / ATCC BAA-587 / NCTC 13253)</name>
    <dbReference type="NCBI Taxonomy" id="257311"/>
    <lineage>
        <taxon>Bacteria</taxon>
        <taxon>Pseudomonadati</taxon>
        <taxon>Pseudomonadota</taxon>
        <taxon>Betaproteobacteria</taxon>
        <taxon>Burkholderiales</taxon>
        <taxon>Alcaligenaceae</taxon>
        <taxon>Bordetella</taxon>
    </lineage>
</organism>
<comment type="function">
    <text evidence="1">This protein binds to 23S rRNA in the presence of protein L20.</text>
</comment>
<comment type="subunit">
    <text evidence="1">Part of the 50S ribosomal subunit. Contacts protein L20.</text>
</comment>
<comment type="similarity">
    <text evidence="1">Belongs to the bacterial ribosomal protein bL21 family.</text>
</comment>